<feature type="chain" id="PRO_1000140148" description="Shikimate kinase 2">
    <location>
        <begin position="1"/>
        <end position="174"/>
    </location>
</feature>
<feature type="region of interest" description="LID domain">
    <location>
        <begin position="112"/>
        <end position="126"/>
    </location>
</feature>
<feature type="binding site" evidence="1">
    <location>
        <begin position="12"/>
        <end position="17"/>
    </location>
    <ligand>
        <name>ATP</name>
        <dbReference type="ChEBI" id="CHEBI:30616"/>
    </ligand>
</feature>
<feature type="binding site" evidence="1">
    <location>
        <position position="16"/>
    </location>
    <ligand>
        <name>Mg(2+)</name>
        <dbReference type="ChEBI" id="CHEBI:18420"/>
    </ligand>
</feature>
<feature type="binding site" evidence="1">
    <location>
        <position position="32"/>
    </location>
    <ligand>
        <name>Mg(2+)</name>
        <dbReference type="ChEBI" id="CHEBI:18420"/>
    </ligand>
</feature>
<feature type="binding site" evidence="1">
    <location>
        <position position="34"/>
    </location>
    <ligand>
        <name>substrate</name>
    </ligand>
</feature>
<feature type="binding site" evidence="1">
    <location>
        <position position="58"/>
    </location>
    <ligand>
        <name>substrate</name>
    </ligand>
</feature>
<feature type="binding site" evidence="1">
    <location>
        <position position="79"/>
    </location>
    <ligand>
        <name>substrate</name>
    </ligand>
</feature>
<feature type="binding site" evidence="1">
    <location>
        <position position="120"/>
    </location>
    <ligand>
        <name>ATP</name>
        <dbReference type="ChEBI" id="CHEBI:30616"/>
    </ligand>
</feature>
<feature type="binding site" evidence="1">
    <location>
        <position position="139"/>
    </location>
    <ligand>
        <name>substrate</name>
    </ligand>
</feature>
<feature type="binding site" evidence="1">
    <location>
        <position position="155"/>
    </location>
    <ligand>
        <name>ATP</name>
        <dbReference type="ChEBI" id="CHEBI:30616"/>
    </ligand>
</feature>
<sequence length="174" mass="18896">MTQTIFMVGARGAGKTTIGKALAQALGYRFVDTDLFMQQTSQMTVAEVVESEGWDGFRLRESMALQAVTAPKTVIATGGGAVLSSENRAFMRDHGRVIYLRASAAVLAKRLAEDPEEAQRPSLTGKPIVEEMLDVLASREALYQDVAHHVLDGTQTPSLVVEQILQMLTGEMVK</sequence>
<dbReference type="EC" id="2.7.1.71" evidence="1"/>
<dbReference type="EMBL" id="CP000950">
    <property type="protein sequence ID" value="ACA69551.1"/>
    <property type="molecule type" value="Genomic_DNA"/>
</dbReference>
<dbReference type="RefSeq" id="WP_011191851.1">
    <property type="nucleotide sequence ID" value="NZ_CP009792.1"/>
</dbReference>
<dbReference type="SMR" id="B1JIG7"/>
<dbReference type="GeneID" id="49787035"/>
<dbReference type="KEGG" id="ypy:YPK_3282"/>
<dbReference type="PATRIC" id="fig|502800.11.peg.4013"/>
<dbReference type="UniPathway" id="UPA00053">
    <property type="reaction ID" value="UER00088"/>
</dbReference>
<dbReference type="GO" id="GO:0005829">
    <property type="term" value="C:cytosol"/>
    <property type="evidence" value="ECO:0007669"/>
    <property type="project" value="TreeGrafter"/>
</dbReference>
<dbReference type="GO" id="GO:0005524">
    <property type="term" value="F:ATP binding"/>
    <property type="evidence" value="ECO:0007669"/>
    <property type="project" value="UniProtKB-UniRule"/>
</dbReference>
<dbReference type="GO" id="GO:0000287">
    <property type="term" value="F:magnesium ion binding"/>
    <property type="evidence" value="ECO:0007669"/>
    <property type="project" value="UniProtKB-UniRule"/>
</dbReference>
<dbReference type="GO" id="GO:0004765">
    <property type="term" value="F:shikimate kinase activity"/>
    <property type="evidence" value="ECO:0007669"/>
    <property type="project" value="UniProtKB-UniRule"/>
</dbReference>
<dbReference type="GO" id="GO:0008652">
    <property type="term" value="P:amino acid biosynthetic process"/>
    <property type="evidence" value="ECO:0007669"/>
    <property type="project" value="UniProtKB-KW"/>
</dbReference>
<dbReference type="GO" id="GO:0009073">
    <property type="term" value="P:aromatic amino acid family biosynthetic process"/>
    <property type="evidence" value="ECO:0007669"/>
    <property type="project" value="UniProtKB-KW"/>
</dbReference>
<dbReference type="GO" id="GO:0009423">
    <property type="term" value="P:chorismate biosynthetic process"/>
    <property type="evidence" value="ECO:0007669"/>
    <property type="project" value="UniProtKB-UniRule"/>
</dbReference>
<dbReference type="CDD" id="cd00464">
    <property type="entry name" value="SK"/>
    <property type="match status" value="1"/>
</dbReference>
<dbReference type="Gene3D" id="3.40.50.300">
    <property type="entry name" value="P-loop containing nucleotide triphosphate hydrolases"/>
    <property type="match status" value="1"/>
</dbReference>
<dbReference type="HAMAP" id="MF_00109">
    <property type="entry name" value="Shikimate_kinase"/>
    <property type="match status" value="1"/>
</dbReference>
<dbReference type="HAMAP" id="MF_01269">
    <property type="entry name" value="Shikimate_kinase_2"/>
    <property type="match status" value="1"/>
</dbReference>
<dbReference type="InterPro" id="IPR027417">
    <property type="entry name" value="P-loop_NTPase"/>
</dbReference>
<dbReference type="InterPro" id="IPR031322">
    <property type="entry name" value="Shikimate/glucono_kinase"/>
</dbReference>
<dbReference type="InterPro" id="IPR000623">
    <property type="entry name" value="Shikimate_kinase/TSH1"/>
</dbReference>
<dbReference type="InterPro" id="IPR027544">
    <property type="entry name" value="Shikimate_kinase_2"/>
</dbReference>
<dbReference type="InterPro" id="IPR023000">
    <property type="entry name" value="Shikimate_kinase_CS"/>
</dbReference>
<dbReference type="NCBIfam" id="NF002988">
    <property type="entry name" value="PRK03731.1"/>
    <property type="match status" value="1"/>
</dbReference>
<dbReference type="PANTHER" id="PTHR21087">
    <property type="entry name" value="SHIKIMATE KINASE"/>
    <property type="match status" value="1"/>
</dbReference>
<dbReference type="PANTHER" id="PTHR21087:SF21">
    <property type="entry name" value="SHIKIMATE KINASE 2"/>
    <property type="match status" value="1"/>
</dbReference>
<dbReference type="Pfam" id="PF01202">
    <property type="entry name" value="SKI"/>
    <property type="match status" value="1"/>
</dbReference>
<dbReference type="PRINTS" id="PR01100">
    <property type="entry name" value="SHIKIMTKNASE"/>
</dbReference>
<dbReference type="SUPFAM" id="SSF52540">
    <property type="entry name" value="P-loop containing nucleoside triphosphate hydrolases"/>
    <property type="match status" value="1"/>
</dbReference>
<dbReference type="PROSITE" id="PS01128">
    <property type="entry name" value="SHIKIMATE_KINASE"/>
    <property type="match status" value="1"/>
</dbReference>
<protein>
    <recommendedName>
        <fullName evidence="1">Shikimate kinase 2</fullName>
        <shortName evidence="1">SK 2</shortName>
        <ecNumber evidence="1">2.7.1.71</ecNumber>
    </recommendedName>
</protein>
<accession>B1JIG7</accession>
<comment type="function">
    <text evidence="1">Catalyzes the specific phosphorylation of the 3-hydroxyl group of shikimic acid using ATP as a cosubstrate.</text>
</comment>
<comment type="catalytic activity">
    <reaction evidence="1">
        <text>shikimate + ATP = 3-phosphoshikimate + ADP + H(+)</text>
        <dbReference type="Rhea" id="RHEA:13121"/>
        <dbReference type="ChEBI" id="CHEBI:15378"/>
        <dbReference type="ChEBI" id="CHEBI:30616"/>
        <dbReference type="ChEBI" id="CHEBI:36208"/>
        <dbReference type="ChEBI" id="CHEBI:145989"/>
        <dbReference type="ChEBI" id="CHEBI:456216"/>
        <dbReference type="EC" id="2.7.1.71"/>
    </reaction>
</comment>
<comment type="cofactor">
    <cofactor evidence="1">
        <name>Mg(2+)</name>
        <dbReference type="ChEBI" id="CHEBI:18420"/>
    </cofactor>
    <text evidence="1">Binds 1 Mg(2+) ion per subunit.</text>
</comment>
<comment type="pathway">
    <text evidence="1">Metabolic intermediate biosynthesis; chorismate biosynthesis; chorismate from D-erythrose 4-phosphate and phosphoenolpyruvate: step 5/7.</text>
</comment>
<comment type="subunit">
    <text evidence="1">Monomer.</text>
</comment>
<comment type="subcellular location">
    <subcellularLocation>
        <location evidence="1">Cytoplasm</location>
    </subcellularLocation>
</comment>
<comment type="domain">
    <text evidence="1">The LID domain closes over the active site upon ATP binding.</text>
</comment>
<comment type="similarity">
    <text evidence="1">Belongs to the shikimate kinase family. AroL subfamily.</text>
</comment>
<organism>
    <name type="scientific">Yersinia pseudotuberculosis serotype O:3 (strain YPIII)</name>
    <dbReference type="NCBI Taxonomy" id="502800"/>
    <lineage>
        <taxon>Bacteria</taxon>
        <taxon>Pseudomonadati</taxon>
        <taxon>Pseudomonadota</taxon>
        <taxon>Gammaproteobacteria</taxon>
        <taxon>Enterobacterales</taxon>
        <taxon>Yersiniaceae</taxon>
        <taxon>Yersinia</taxon>
    </lineage>
</organism>
<gene>
    <name evidence="1" type="primary">aroL</name>
    <name type="ordered locus">YPK_3282</name>
</gene>
<proteinExistence type="inferred from homology"/>
<evidence type="ECO:0000255" key="1">
    <source>
        <dbReference type="HAMAP-Rule" id="MF_01269"/>
    </source>
</evidence>
<name>AROL_YERPY</name>
<reference key="1">
    <citation type="submission" date="2008-02" db="EMBL/GenBank/DDBJ databases">
        <title>Complete sequence of Yersinia pseudotuberculosis YPIII.</title>
        <authorList>
            <consortium name="US DOE Joint Genome Institute"/>
            <person name="Copeland A."/>
            <person name="Lucas S."/>
            <person name="Lapidus A."/>
            <person name="Glavina del Rio T."/>
            <person name="Dalin E."/>
            <person name="Tice H."/>
            <person name="Bruce D."/>
            <person name="Goodwin L."/>
            <person name="Pitluck S."/>
            <person name="Munk A.C."/>
            <person name="Brettin T."/>
            <person name="Detter J.C."/>
            <person name="Han C."/>
            <person name="Tapia R."/>
            <person name="Schmutz J."/>
            <person name="Larimer F."/>
            <person name="Land M."/>
            <person name="Hauser L."/>
            <person name="Challacombe J.F."/>
            <person name="Green L."/>
            <person name="Lindler L.E."/>
            <person name="Nikolich M.P."/>
            <person name="Richardson P."/>
        </authorList>
    </citation>
    <scope>NUCLEOTIDE SEQUENCE [LARGE SCALE GENOMIC DNA]</scope>
    <source>
        <strain>YPIII</strain>
    </source>
</reference>
<keyword id="KW-0028">Amino-acid biosynthesis</keyword>
<keyword id="KW-0057">Aromatic amino acid biosynthesis</keyword>
<keyword id="KW-0067">ATP-binding</keyword>
<keyword id="KW-0963">Cytoplasm</keyword>
<keyword id="KW-0418">Kinase</keyword>
<keyword id="KW-0460">Magnesium</keyword>
<keyword id="KW-0479">Metal-binding</keyword>
<keyword id="KW-0547">Nucleotide-binding</keyword>
<keyword id="KW-0808">Transferase</keyword>